<name>RECF_COXB2</name>
<proteinExistence type="inferred from homology"/>
<protein>
    <recommendedName>
        <fullName evidence="1">DNA replication and repair protein RecF</fullName>
    </recommendedName>
</protein>
<evidence type="ECO:0000255" key="1">
    <source>
        <dbReference type="HAMAP-Rule" id="MF_00365"/>
    </source>
</evidence>
<organism>
    <name type="scientific">Coxiella burnetii (strain CbuG_Q212)</name>
    <name type="common">Coxiella burnetii (strain Q212)</name>
    <dbReference type="NCBI Taxonomy" id="434923"/>
    <lineage>
        <taxon>Bacteria</taxon>
        <taxon>Pseudomonadati</taxon>
        <taxon>Pseudomonadota</taxon>
        <taxon>Gammaproteobacteria</taxon>
        <taxon>Legionellales</taxon>
        <taxon>Coxiellaceae</taxon>
        <taxon>Coxiella</taxon>
    </lineage>
</organism>
<gene>
    <name evidence="1" type="primary">recF</name>
    <name type="ordered locus">CbuG_0004</name>
</gene>
<reference key="1">
    <citation type="journal article" date="2009" name="Infect. Immun.">
        <title>Comparative genomics reveal extensive transposon-mediated genomic plasticity and diversity among potential effector proteins within the genus Coxiella.</title>
        <authorList>
            <person name="Beare P.A."/>
            <person name="Unsworth N."/>
            <person name="Andoh M."/>
            <person name="Voth D.E."/>
            <person name="Omsland A."/>
            <person name="Gilk S.D."/>
            <person name="Williams K.P."/>
            <person name="Sobral B.W."/>
            <person name="Kupko J.J. III"/>
            <person name="Porcella S.F."/>
            <person name="Samuel J.E."/>
            <person name="Heinzen R.A."/>
        </authorList>
    </citation>
    <scope>NUCLEOTIDE SEQUENCE [LARGE SCALE GENOMIC DNA]</scope>
    <source>
        <strain>CbuG_Q212</strain>
    </source>
</reference>
<accession>B6J289</accession>
<comment type="function">
    <text evidence="1">The RecF protein is involved in DNA metabolism; it is required for DNA replication and normal SOS inducibility. RecF binds preferentially to single-stranded, linear DNA. It also seems to bind ATP.</text>
</comment>
<comment type="subcellular location">
    <subcellularLocation>
        <location evidence="1">Cytoplasm</location>
    </subcellularLocation>
</comment>
<comment type="similarity">
    <text evidence="1">Belongs to the RecF family.</text>
</comment>
<keyword id="KW-0067">ATP-binding</keyword>
<keyword id="KW-0963">Cytoplasm</keyword>
<keyword id="KW-0227">DNA damage</keyword>
<keyword id="KW-0234">DNA repair</keyword>
<keyword id="KW-0235">DNA replication</keyword>
<keyword id="KW-0238">DNA-binding</keyword>
<keyword id="KW-0547">Nucleotide-binding</keyword>
<keyword id="KW-0742">SOS response</keyword>
<feature type="chain" id="PRO_1000121102" description="DNA replication and repair protein RecF">
    <location>
        <begin position="1"/>
        <end position="357"/>
    </location>
</feature>
<feature type="binding site" evidence="1">
    <location>
        <begin position="31"/>
        <end position="38"/>
    </location>
    <ligand>
        <name>ATP</name>
        <dbReference type="ChEBI" id="CHEBI:30616"/>
    </ligand>
</feature>
<sequence length="357" mass="41138">MPYIGSLKVNQFRNLADVDITPHSQFNFFFGQNGAGKTSILESIYYLSVGRSFRTHLPQRLIQDNTDRFLIFITLYNGTQFIPLGVERDCHGDRCLRINGETASSWSLAAKRLPLCSLSAMSHRFLLDGPRVRRQFLDWLMFHVEPSFFSIWQRLQRSLKQRNAALKAKLPLGEITHWDKMLVEDGERLHQLRQNVVTEFKPLFTQMLQQFLPAYPLIGHYFRGWSEKYSLMEQLQINLKQDLQRGYTQAGPQRADFRLTLRDLPAQDILSQGQQKLVTYALHFAQGLLLKEKTGISPIYLIDDLPAELDANKRDCVIDLVNCLESQVFISGIDPNEIRLPPHSTLFHVKHGKVAAL</sequence>
<dbReference type="EMBL" id="CP001019">
    <property type="protein sequence ID" value="ACJ17463.1"/>
    <property type="molecule type" value="Genomic_DNA"/>
</dbReference>
<dbReference type="RefSeq" id="WP_012569531.1">
    <property type="nucleotide sequence ID" value="NC_011527.1"/>
</dbReference>
<dbReference type="SMR" id="B6J289"/>
<dbReference type="KEGG" id="cbg:CbuG_0004"/>
<dbReference type="HOGENOM" id="CLU_040267_0_0_6"/>
<dbReference type="GO" id="GO:0005737">
    <property type="term" value="C:cytoplasm"/>
    <property type="evidence" value="ECO:0007669"/>
    <property type="project" value="UniProtKB-SubCell"/>
</dbReference>
<dbReference type="GO" id="GO:0005524">
    <property type="term" value="F:ATP binding"/>
    <property type="evidence" value="ECO:0007669"/>
    <property type="project" value="UniProtKB-UniRule"/>
</dbReference>
<dbReference type="GO" id="GO:0003697">
    <property type="term" value="F:single-stranded DNA binding"/>
    <property type="evidence" value="ECO:0007669"/>
    <property type="project" value="UniProtKB-UniRule"/>
</dbReference>
<dbReference type="GO" id="GO:0006260">
    <property type="term" value="P:DNA replication"/>
    <property type="evidence" value="ECO:0007669"/>
    <property type="project" value="UniProtKB-UniRule"/>
</dbReference>
<dbReference type="GO" id="GO:0000731">
    <property type="term" value="P:DNA synthesis involved in DNA repair"/>
    <property type="evidence" value="ECO:0007669"/>
    <property type="project" value="TreeGrafter"/>
</dbReference>
<dbReference type="GO" id="GO:0006302">
    <property type="term" value="P:double-strand break repair"/>
    <property type="evidence" value="ECO:0007669"/>
    <property type="project" value="TreeGrafter"/>
</dbReference>
<dbReference type="GO" id="GO:0009432">
    <property type="term" value="P:SOS response"/>
    <property type="evidence" value="ECO:0007669"/>
    <property type="project" value="UniProtKB-UniRule"/>
</dbReference>
<dbReference type="Gene3D" id="3.40.50.300">
    <property type="entry name" value="P-loop containing nucleotide triphosphate hydrolases"/>
    <property type="match status" value="1"/>
</dbReference>
<dbReference type="Gene3D" id="1.20.1050.90">
    <property type="entry name" value="RecF/RecN/SMC, N-terminal domain"/>
    <property type="match status" value="1"/>
</dbReference>
<dbReference type="HAMAP" id="MF_00365">
    <property type="entry name" value="RecF"/>
    <property type="match status" value="1"/>
</dbReference>
<dbReference type="InterPro" id="IPR001238">
    <property type="entry name" value="DNA-binding_RecF"/>
</dbReference>
<dbReference type="InterPro" id="IPR018078">
    <property type="entry name" value="DNA-binding_RecF_CS"/>
</dbReference>
<dbReference type="InterPro" id="IPR027417">
    <property type="entry name" value="P-loop_NTPase"/>
</dbReference>
<dbReference type="InterPro" id="IPR003395">
    <property type="entry name" value="RecF/RecN/SMC_N"/>
</dbReference>
<dbReference type="InterPro" id="IPR042174">
    <property type="entry name" value="RecF_2"/>
</dbReference>
<dbReference type="NCBIfam" id="TIGR00611">
    <property type="entry name" value="recf"/>
    <property type="match status" value="1"/>
</dbReference>
<dbReference type="PANTHER" id="PTHR32182">
    <property type="entry name" value="DNA REPLICATION AND REPAIR PROTEIN RECF"/>
    <property type="match status" value="1"/>
</dbReference>
<dbReference type="PANTHER" id="PTHR32182:SF0">
    <property type="entry name" value="DNA REPLICATION AND REPAIR PROTEIN RECF"/>
    <property type="match status" value="1"/>
</dbReference>
<dbReference type="Pfam" id="PF02463">
    <property type="entry name" value="SMC_N"/>
    <property type="match status" value="1"/>
</dbReference>
<dbReference type="SUPFAM" id="SSF52540">
    <property type="entry name" value="P-loop containing nucleoside triphosphate hydrolases"/>
    <property type="match status" value="1"/>
</dbReference>
<dbReference type="PROSITE" id="PS00617">
    <property type="entry name" value="RECF_1"/>
    <property type="match status" value="1"/>
</dbReference>
<dbReference type="PROSITE" id="PS00618">
    <property type="entry name" value="RECF_2"/>
    <property type="match status" value="1"/>
</dbReference>